<keyword id="KW-0256">Endoplasmic reticulum</keyword>
<keyword id="KW-0472">Membrane</keyword>
<keyword id="KW-0653">Protein transport</keyword>
<keyword id="KW-0811">Translocation</keyword>
<keyword id="KW-0812">Transmembrane</keyword>
<keyword id="KW-1133">Transmembrane helix</keyword>
<keyword id="KW-0813">Transport</keyword>
<dbReference type="EMBL" id="AF346601">
    <property type="protein sequence ID" value="AAK29082.1"/>
    <property type="molecule type" value="mRNA"/>
</dbReference>
<dbReference type="RefSeq" id="NP_001117774.1">
    <property type="nucleotide sequence ID" value="NM_001124302.1"/>
</dbReference>
<dbReference type="SMR" id="Q98SN8"/>
<dbReference type="Ensembl" id="ENSOMYT00000115850.2">
    <property type="protein sequence ID" value="ENSOMYP00000106924.1"/>
    <property type="gene ID" value="ENSOMYG00000047834.2"/>
</dbReference>
<dbReference type="GeneID" id="100135961"/>
<dbReference type="KEGG" id="omy:100135961"/>
<dbReference type="GeneTree" id="ENSGT00390000003721"/>
<dbReference type="OrthoDB" id="420669at2759"/>
<dbReference type="Proteomes" id="UP000694395">
    <property type="component" value="Chromosome 17"/>
</dbReference>
<dbReference type="GO" id="GO:0005789">
    <property type="term" value="C:endoplasmic reticulum membrane"/>
    <property type="evidence" value="ECO:0007669"/>
    <property type="project" value="UniProtKB-SubCell"/>
</dbReference>
<dbReference type="GO" id="GO:0015031">
    <property type="term" value="P:protein transport"/>
    <property type="evidence" value="ECO:0007669"/>
    <property type="project" value="UniProtKB-KW"/>
</dbReference>
<dbReference type="FunFam" id="1.10.3370.10:FF:000002">
    <property type="entry name" value="Transport Sec61 subunit alpha isoform 2"/>
    <property type="match status" value="1"/>
</dbReference>
<dbReference type="Gene3D" id="1.10.3370.10">
    <property type="entry name" value="SecY subunit domain"/>
    <property type="match status" value="1"/>
</dbReference>
<dbReference type="InterPro" id="IPR002208">
    <property type="entry name" value="SecY/SEC61-alpha"/>
</dbReference>
<dbReference type="InterPro" id="IPR030659">
    <property type="entry name" value="SecY_CS"/>
</dbReference>
<dbReference type="InterPro" id="IPR023201">
    <property type="entry name" value="SecY_dom_sf"/>
</dbReference>
<dbReference type="InterPro" id="IPR019561">
    <property type="entry name" value="Translocon_Sec61/SecY_plug_dom"/>
</dbReference>
<dbReference type="NCBIfam" id="TIGR00967">
    <property type="entry name" value="3a0501s007"/>
    <property type="match status" value="1"/>
</dbReference>
<dbReference type="NCBIfam" id="NF006341">
    <property type="entry name" value="PRK08568.1-5"/>
    <property type="match status" value="1"/>
</dbReference>
<dbReference type="PANTHER" id="PTHR10906">
    <property type="entry name" value="SECY/SEC61-ALPHA FAMILY MEMBER"/>
    <property type="match status" value="1"/>
</dbReference>
<dbReference type="Pfam" id="PF10559">
    <property type="entry name" value="Plug_translocon"/>
    <property type="match status" value="1"/>
</dbReference>
<dbReference type="Pfam" id="PF00344">
    <property type="entry name" value="SecY"/>
    <property type="match status" value="1"/>
</dbReference>
<dbReference type="PIRSF" id="PIRSF004557">
    <property type="entry name" value="SecY"/>
    <property type="match status" value="1"/>
</dbReference>
<dbReference type="SUPFAM" id="SSF103491">
    <property type="entry name" value="Preprotein translocase SecY subunit"/>
    <property type="match status" value="1"/>
</dbReference>
<dbReference type="PROSITE" id="PS00755">
    <property type="entry name" value="SECY_1"/>
    <property type="match status" value="1"/>
</dbReference>
<dbReference type="PROSITE" id="PS00756">
    <property type="entry name" value="SECY_2"/>
    <property type="match status" value="1"/>
</dbReference>
<gene>
    <name type="primary">sec61ab</name>
</gene>
<sequence length="476" mass="52312">MGIKFLEVIKPFCAVLPEIQKPERKIQFREKVLWTAITLFIFLVCCQIPLFGIMSSDSADPFYWMRVILASNRGTLMELGISPIVTSGLIMQLLAGAKIIEVGDTPKDRALFNGAQKLFGMIITIGQAIVYVMTGMYGDPSDMGAGICLLIIIQLFVAGLIVLLLDELLQKGYGLGSGISLFIATNICETIVWKAFSPTTVNTGRGTEFEGAIIALFHLLATRTDKVRALREAFYRQNLPNLMNLLATVFVFGVVIYFQGFRVDLPIKSARYRGQYNTYPIKLFYTSNIPIILQSALVSNLYVISQMLSTRFSGNFLVNLLGTWSDTSSGGPARAYPVGGLCYYFSPPESFGSVLDDPIHAAIYICFMLGSCAFFSKTWIEVSGSSAKDVAKQLKEQQMVMRGHRETSMVHELNRYIPTAAAFGGLCIGGLSVMADFLGAIGSGTGILLAVTIIYQYFEIFVKEQSEMGSMGALLF</sequence>
<organism>
    <name type="scientific">Oncorhynchus mykiss</name>
    <name type="common">Rainbow trout</name>
    <name type="synonym">Salmo gairdneri</name>
    <dbReference type="NCBI Taxonomy" id="8022"/>
    <lineage>
        <taxon>Eukaryota</taxon>
        <taxon>Metazoa</taxon>
        <taxon>Chordata</taxon>
        <taxon>Craniata</taxon>
        <taxon>Vertebrata</taxon>
        <taxon>Euteleostomi</taxon>
        <taxon>Actinopterygii</taxon>
        <taxon>Neopterygii</taxon>
        <taxon>Teleostei</taxon>
        <taxon>Protacanthopterygii</taxon>
        <taxon>Salmoniformes</taxon>
        <taxon>Salmonidae</taxon>
        <taxon>Salmoninae</taxon>
        <taxon>Oncorhynchus</taxon>
    </lineage>
</organism>
<feature type="initiator methionine" description="Removed" evidence="1">
    <location>
        <position position="1"/>
    </location>
</feature>
<feature type="chain" id="PRO_0000131807" description="Protein transport protein Sec61 subunit alpha isoform B">
    <location>
        <begin position="2"/>
        <end position="476"/>
    </location>
</feature>
<feature type="topological domain" description="Cytoplasmic" evidence="4">
    <location>
        <begin position="2"/>
        <end position="33"/>
    </location>
</feature>
<feature type="transmembrane region" description="Helical" evidence="4">
    <location>
        <begin position="34"/>
        <end position="53"/>
    </location>
</feature>
<feature type="topological domain" description="Lumenal" evidence="4">
    <location>
        <begin position="54"/>
        <end position="76"/>
    </location>
</feature>
<feature type="transmembrane region" description="Helical" evidence="4">
    <location>
        <begin position="77"/>
        <end position="96"/>
    </location>
</feature>
<feature type="topological domain" description="Cytoplasmic" evidence="4">
    <location>
        <begin position="97"/>
        <end position="117"/>
    </location>
</feature>
<feature type="transmembrane region" description="Helical" evidence="4">
    <location>
        <begin position="118"/>
        <end position="138"/>
    </location>
</feature>
<feature type="topological domain" description="Lumenal" evidence="4">
    <location>
        <begin position="139"/>
        <end position="144"/>
    </location>
</feature>
<feature type="transmembrane region" description="Helical" evidence="4">
    <location>
        <begin position="145"/>
        <end position="165"/>
    </location>
</feature>
<feature type="topological domain" description="Cytoplasmic" evidence="4">
    <location>
        <begin position="166"/>
        <end position="172"/>
    </location>
</feature>
<feature type="transmembrane region" description="Helical" evidence="4">
    <location>
        <begin position="173"/>
        <end position="193"/>
    </location>
</feature>
<feature type="topological domain" description="Lumenal" evidence="4">
    <location>
        <begin position="194"/>
        <end position="240"/>
    </location>
</feature>
<feature type="transmembrane region" description="Helical" evidence="4">
    <location>
        <begin position="241"/>
        <end position="261"/>
    </location>
</feature>
<feature type="topological domain" description="Cytoplasmic" evidence="4">
    <location>
        <begin position="262"/>
        <end position="288"/>
    </location>
</feature>
<feature type="transmembrane region" description="Helical" evidence="4">
    <location>
        <begin position="289"/>
        <end position="309"/>
    </location>
</feature>
<feature type="topological domain" description="Lumenal" evidence="4">
    <location>
        <begin position="310"/>
        <end position="354"/>
    </location>
</feature>
<feature type="transmembrane region" description="Helical" evidence="4">
    <location>
        <begin position="355"/>
        <end position="375"/>
    </location>
</feature>
<feature type="topological domain" description="Cytoplasmic" evidence="4">
    <location>
        <begin position="376"/>
        <end position="420"/>
    </location>
</feature>
<feature type="transmembrane region" description="Helical" evidence="4">
    <location>
        <begin position="421"/>
        <end position="441"/>
    </location>
</feature>
<feature type="topological domain" description="Lumenal" evidence="4">
    <location>
        <begin position="442"/>
        <end position="445"/>
    </location>
</feature>
<feature type="transmembrane region" description="Helical" evidence="4">
    <location>
        <begin position="446"/>
        <end position="462"/>
    </location>
</feature>
<feature type="topological domain" description="Cytoplasmic" evidence="4">
    <location>
        <begin position="463"/>
        <end position="476"/>
    </location>
</feature>
<accession>Q98SN8</accession>
<reference key="1">
    <citation type="submission" date="2001-02" db="EMBL/GenBank/DDBJ databases">
        <title>Sec61 alpha isoforms.</title>
        <authorList>
            <person name="Finke K."/>
            <person name="Prehn S."/>
            <person name="Hartmann E."/>
        </authorList>
    </citation>
    <scope>NUCLEOTIDE SEQUENCE [MRNA]</scope>
</reference>
<proteinExistence type="evidence at transcript level"/>
<name>S61A2_ONCMY</name>
<comment type="function">
    <text evidence="3">Component of SEC61 channel-forming translocon complex that mediates transport of signal peptide-containing precursor polypeptides across the endoplasmic reticulum (ER). Forms a ribosome receptor and a gated pore in the ER membrane, both functions required for cotranslational translocation of nascent polypeptides.</text>
</comment>
<comment type="subunit">
    <text evidence="2">The SEC61 channel-forming translocon complex consists of channel-forming core components SEC61A1, SEC61B and SEC61G and different auxiliary components such as SEC62 and SEC63.</text>
</comment>
<comment type="subcellular location">
    <subcellularLocation>
        <location evidence="3">Endoplasmic reticulum membrane</location>
        <topology evidence="4">Multi-pass membrane protein</topology>
    </subcellularLocation>
</comment>
<comment type="similarity">
    <text evidence="5">Belongs to the SecY/SEC61-alpha family.</text>
</comment>
<protein>
    <recommendedName>
        <fullName>Protein transport protein Sec61 subunit alpha isoform B</fullName>
    </recommendedName>
</protein>
<evidence type="ECO:0000250" key="1"/>
<evidence type="ECO:0000250" key="2">
    <source>
        <dbReference type="UniProtKB" id="P38377"/>
    </source>
</evidence>
<evidence type="ECO:0000250" key="3">
    <source>
        <dbReference type="UniProtKB" id="P61619"/>
    </source>
</evidence>
<evidence type="ECO:0000255" key="4"/>
<evidence type="ECO:0000305" key="5"/>